<keyword id="KW-0298">Galactitol metabolism</keyword>
<feature type="chain" id="PRO_0000372502" description="D-tagatose-1,6-bisphosphate aldolase subunit GatZ">
    <location>
        <begin position="1"/>
        <end position="420"/>
    </location>
</feature>
<dbReference type="EMBL" id="CP000247">
    <property type="protein sequence ID" value="ABG70132.1"/>
    <property type="molecule type" value="Genomic_DNA"/>
</dbReference>
<dbReference type="RefSeq" id="WP_000853833.1">
    <property type="nucleotide sequence ID" value="NC_008253.1"/>
</dbReference>
<dbReference type="SMR" id="Q0TFZ7"/>
<dbReference type="KEGG" id="ecp:ECP_2133"/>
<dbReference type="HOGENOM" id="CLU_053334_0_0_6"/>
<dbReference type="UniPathway" id="UPA00704">
    <property type="reaction ID" value="UER00716"/>
</dbReference>
<dbReference type="Proteomes" id="UP000009182">
    <property type="component" value="Chromosome"/>
</dbReference>
<dbReference type="GO" id="GO:0005886">
    <property type="term" value="C:plasma membrane"/>
    <property type="evidence" value="ECO:0007669"/>
    <property type="project" value="TreeGrafter"/>
</dbReference>
<dbReference type="GO" id="GO:2001059">
    <property type="term" value="P:D-tagatose 6-phosphate catabolic process"/>
    <property type="evidence" value="ECO:0007669"/>
    <property type="project" value="UniProtKB-UniRule"/>
</dbReference>
<dbReference type="GO" id="GO:0019402">
    <property type="term" value="P:galactitol metabolic process"/>
    <property type="evidence" value="ECO:0007669"/>
    <property type="project" value="UniProtKB-KW"/>
</dbReference>
<dbReference type="GO" id="GO:0009401">
    <property type="term" value="P:phosphoenolpyruvate-dependent sugar phosphotransferase system"/>
    <property type="evidence" value="ECO:0007669"/>
    <property type="project" value="TreeGrafter"/>
</dbReference>
<dbReference type="FunFam" id="3.20.20.70:FF:000141">
    <property type="entry name" value="D-tagatose-1,6-bisphosphate aldolase subunit GatZ"/>
    <property type="match status" value="1"/>
</dbReference>
<dbReference type="Gene3D" id="3.20.20.70">
    <property type="entry name" value="Aldolase class I"/>
    <property type="match status" value="1"/>
</dbReference>
<dbReference type="Gene3D" id="1.10.400.20">
    <property type="entry name" value="putative tagatose 6-phosphate kinase domain like"/>
    <property type="match status" value="1"/>
</dbReference>
<dbReference type="HAMAP" id="MF_01296">
    <property type="entry name" value="Tagatose_aldol_GatZ"/>
    <property type="match status" value="1"/>
</dbReference>
<dbReference type="InterPro" id="IPR013785">
    <property type="entry name" value="Aldolase_TIM"/>
</dbReference>
<dbReference type="InterPro" id="IPR012062">
    <property type="entry name" value="GatZ/KbaZ-like"/>
</dbReference>
<dbReference type="InterPro" id="IPR050303">
    <property type="entry name" value="GatZ_KbaZ_carbometab"/>
</dbReference>
<dbReference type="InterPro" id="IPR023436">
    <property type="entry name" value="TagBP_ald_GatZ"/>
</dbReference>
<dbReference type="NCBIfam" id="TIGR02810">
    <property type="entry name" value="agaZ_gatZ"/>
    <property type="match status" value="1"/>
</dbReference>
<dbReference type="NCBIfam" id="NF011626">
    <property type="entry name" value="PRK15052.1"/>
    <property type="match status" value="1"/>
</dbReference>
<dbReference type="PANTHER" id="PTHR32502:SF12">
    <property type="entry name" value="D-TAGATOSE-1,6-BISPHOSPHATE ALDOLASE SUBUNIT GATZ"/>
    <property type="match status" value="1"/>
</dbReference>
<dbReference type="PANTHER" id="PTHR32502">
    <property type="entry name" value="N-ACETYLGALACTOSAMINE PERMEASE II COMPONENT-RELATED"/>
    <property type="match status" value="1"/>
</dbReference>
<dbReference type="Pfam" id="PF08013">
    <property type="entry name" value="GatZ_KbaZ-like"/>
    <property type="match status" value="1"/>
</dbReference>
<dbReference type="PIRSF" id="PIRSF009264">
    <property type="entry name" value="TagBP_ald_AgaZ"/>
    <property type="match status" value="1"/>
</dbReference>
<dbReference type="SUPFAM" id="SSF51569">
    <property type="entry name" value="Aldolase"/>
    <property type="match status" value="1"/>
</dbReference>
<proteinExistence type="inferred from homology"/>
<gene>
    <name evidence="1" type="primary">gatZ</name>
    <name type="ordered locus">ECP_2133</name>
</gene>
<reference key="1">
    <citation type="journal article" date="2006" name="Mol. Microbiol.">
        <title>Role of pathogenicity island-associated integrases in the genome plasticity of uropathogenic Escherichia coli strain 536.</title>
        <authorList>
            <person name="Hochhut B."/>
            <person name="Wilde C."/>
            <person name="Balling G."/>
            <person name="Middendorf B."/>
            <person name="Dobrindt U."/>
            <person name="Brzuszkiewicz E."/>
            <person name="Gottschalk G."/>
            <person name="Carniel E."/>
            <person name="Hacker J."/>
        </authorList>
    </citation>
    <scope>NUCLEOTIDE SEQUENCE [LARGE SCALE GENOMIC DNA]</scope>
    <source>
        <strain>536 / UPEC</strain>
    </source>
</reference>
<name>GATZ_ECOL5</name>
<evidence type="ECO:0000255" key="1">
    <source>
        <dbReference type="HAMAP-Rule" id="MF_01296"/>
    </source>
</evidence>
<protein>
    <recommendedName>
        <fullName evidence="1">D-tagatose-1,6-bisphosphate aldolase subunit GatZ</fullName>
    </recommendedName>
</protein>
<accession>Q0TFZ7</accession>
<organism>
    <name type="scientific">Escherichia coli O6:K15:H31 (strain 536 / UPEC)</name>
    <dbReference type="NCBI Taxonomy" id="362663"/>
    <lineage>
        <taxon>Bacteria</taxon>
        <taxon>Pseudomonadati</taxon>
        <taxon>Pseudomonadota</taxon>
        <taxon>Gammaproteobacteria</taxon>
        <taxon>Enterobacterales</taxon>
        <taxon>Enterobacteriaceae</taxon>
        <taxon>Escherichia</taxon>
    </lineage>
</organism>
<sequence>MKTLIARHKAGEHIGICSVCSAHPLVIEAALAFDRNSTRKVLIEATSNQVNQFGGYTGMTPADFREFVFAIADKVGFARERIILGGDHLGPNCWQQENADAAMEKSVELVKAYVRAGFSKIHLDASMSCADDSIPLAPETVAERAAVLCLAAESVATDCQREQLNYVIGTEVPVPGGEASAIQSVHITQVEDAANTLRTHQKAFIARGLAEALTRVIAIVVQPGVEFDHSNIIHYQAQEAQALAQWIEKTKMVYEAHSTDYQTQTAYRELVRDHFAILKVGPALTFALREAIFALAQIEQELIAPENRSRCLAVIEDVMLDEPQYWKKYYRTGFNDSLLDIRYSLSDRIRYYWPHSRIKNSVETMMVNLEGVDIPLGMISQYLPKQFERIQSGELSAIPHQLIMDKIYDVLRAYRYGCAE</sequence>
<comment type="function">
    <text evidence="1">Component of the tagatose-1,6-bisphosphate aldolase GatYZ that is required for full activity and stability of the Y subunit. Could have a chaperone-like function for the proper and stable folding of GatY. When expressed alone, GatZ does not show any aldolase activity. Is involved in the catabolism of galactitol.</text>
</comment>
<comment type="pathway">
    <text evidence="1">Carbohydrate metabolism; D-tagatose 6-phosphate degradation; D-glyceraldehyde 3-phosphate and glycerone phosphate from D-tagatose 6-phosphate: step 2/2.</text>
</comment>
<comment type="subunit">
    <text evidence="1">Forms a complex with GatY.</text>
</comment>
<comment type="similarity">
    <text evidence="1">Belongs to the GatZ/KbaZ family. GatZ subfamily.</text>
</comment>